<accession>Q9P7X5</accession>
<feature type="chain" id="PRO_0000256832" description="Protein kinase domain-containing protein ppk32">
    <location>
        <begin position="1"/>
        <end position="749"/>
    </location>
</feature>
<feature type="domain" description="Protein kinase" evidence="1">
    <location>
        <begin position="21"/>
        <end position="317"/>
    </location>
</feature>
<feature type="region of interest" description="Disordered" evidence="2">
    <location>
        <begin position="598"/>
        <end position="677"/>
    </location>
</feature>
<feature type="region of interest" description="Disordered" evidence="2">
    <location>
        <begin position="706"/>
        <end position="749"/>
    </location>
</feature>
<feature type="compositionally biased region" description="Polar residues" evidence="2">
    <location>
        <begin position="602"/>
        <end position="651"/>
    </location>
</feature>
<feature type="compositionally biased region" description="Low complexity" evidence="2">
    <location>
        <begin position="657"/>
        <end position="670"/>
    </location>
</feature>
<feature type="compositionally biased region" description="Low complexity" evidence="2">
    <location>
        <begin position="721"/>
        <end position="735"/>
    </location>
</feature>
<feature type="modified residue" description="Phosphoserine" evidence="4">
    <location>
        <position position="632"/>
    </location>
</feature>
<sequence length="749" mass="82824">MLANALRLVSNSKKIKYDYDIQKENSVQVGPWTVYSASKKGTNEEVSVFTFDKKNLSTLLKRGSIDSNLKTNYVLELLRKDVSSLSRLRHPSLLQVVEPLEESKSSMSFVTRRIQSMLQDFIKSSNGGFSNYGSSANGKSSGNALEEVEIQKGLLQIIDGLVFLHGSAKVIHYNIRPSSVVVDAKGDWKLCGFSFSQSVESARYEFNDYDFGIPSSLQQSMDFLAPEYITHEIAGPESDVFSFGCLIYSIFNKNQSIINANNHLLSYEKEITSLNSPTFIESKNLPSENLKSLLKETLAVDPKQRASMFELERSPYFTGSAIAALRFLESFPEKLPSEKVSFMESLSKNLTTFPYRIQSQKILPTLLDHLNDQKLVPSLLPCIFEISKGLDSSIFSSKVFTAIFPIISAANSYPERVPLCIFQYMDCLKSKLPSGEFLSKIVPFIYGCFENSSLNVQTTSIQILGTLLDIIDVTTVKSSICPKLYHSFSVTNQLDVKVAILDTFNVFINQKFLDSFAIVDKLLPVLEKVKTREPTVVMGMVTVYISAGAIIPEETVHEQVIPRLWILSVSPSLSLEQYNKCMREIRSLSDAVQKSHAKKLQSKPSSVVPNRITTDPFSSQTKEATSKPSSISPNKATTNIFTSQASLSSQGVARETSSASSYRSYSQRASTPAVTAKSSFHYATPTSGLSNFNSVTPSSSASLYPPLIPSEARTPSVQPANRRVTTPVVNQNTVTSDSSNDLGGWKSLL</sequence>
<reference key="1">
    <citation type="journal article" date="2002" name="Nature">
        <title>The genome sequence of Schizosaccharomyces pombe.</title>
        <authorList>
            <person name="Wood V."/>
            <person name="Gwilliam R."/>
            <person name="Rajandream M.A."/>
            <person name="Lyne M.H."/>
            <person name="Lyne R."/>
            <person name="Stewart A."/>
            <person name="Sgouros J.G."/>
            <person name="Peat N."/>
            <person name="Hayles J."/>
            <person name="Baker S.G."/>
            <person name="Basham D."/>
            <person name="Bowman S."/>
            <person name="Brooks K."/>
            <person name="Brown D."/>
            <person name="Brown S."/>
            <person name="Chillingworth T."/>
            <person name="Churcher C.M."/>
            <person name="Collins M."/>
            <person name="Connor R."/>
            <person name="Cronin A."/>
            <person name="Davis P."/>
            <person name="Feltwell T."/>
            <person name="Fraser A."/>
            <person name="Gentles S."/>
            <person name="Goble A."/>
            <person name="Hamlin N."/>
            <person name="Harris D.E."/>
            <person name="Hidalgo J."/>
            <person name="Hodgson G."/>
            <person name="Holroyd S."/>
            <person name="Hornsby T."/>
            <person name="Howarth S."/>
            <person name="Huckle E.J."/>
            <person name="Hunt S."/>
            <person name="Jagels K."/>
            <person name="James K.D."/>
            <person name="Jones L."/>
            <person name="Jones M."/>
            <person name="Leather S."/>
            <person name="McDonald S."/>
            <person name="McLean J."/>
            <person name="Mooney P."/>
            <person name="Moule S."/>
            <person name="Mungall K.L."/>
            <person name="Murphy L.D."/>
            <person name="Niblett D."/>
            <person name="Odell C."/>
            <person name="Oliver K."/>
            <person name="O'Neil S."/>
            <person name="Pearson D."/>
            <person name="Quail M.A."/>
            <person name="Rabbinowitsch E."/>
            <person name="Rutherford K.M."/>
            <person name="Rutter S."/>
            <person name="Saunders D."/>
            <person name="Seeger K."/>
            <person name="Sharp S."/>
            <person name="Skelton J."/>
            <person name="Simmonds M.N."/>
            <person name="Squares R."/>
            <person name="Squares S."/>
            <person name="Stevens K."/>
            <person name="Taylor K."/>
            <person name="Taylor R.G."/>
            <person name="Tivey A."/>
            <person name="Walsh S.V."/>
            <person name="Warren T."/>
            <person name="Whitehead S."/>
            <person name="Woodward J.R."/>
            <person name="Volckaert G."/>
            <person name="Aert R."/>
            <person name="Robben J."/>
            <person name="Grymonprez B."/>
            <person name="Weltjens I."/>
            <person name="Vanstreels E."/>
            <person name="Rieger M."/>
            <person name="Schaefer M."/>
            <person name="Mueller-Auer S."/>
            <person name="Gabel C."/>
            <person name="Fuchs M."/>
            <person name="Duesterhoeft A."/>
            <person name="Fritzc C."/>
            <person name="Holzer E."/>
            <person name="Moestl D."/>
            <person name="Hilbert H."/>
            <person name="Borzym K."/>
            <person name="Langer I."/>
            <person name="Beck A."/>
            <person name="Lehrach H."/>
            <person name="Reinhardt R."/>
            <person name="Pohl T.M."/>
            <person name="Eger P."/>
            <person name="Zimmermann W."/>
            <person name="Wedler H."/>
            <person name="Wambutt R."/>
            <person name="Purnelle B."/>
            <person name="Goffeau A."/>
            <person name="Cadieu E."/>
            <person name="Dreano S."/>
            <person name="Gloux S."/>
            <person name="Lelaure V."/>
            <person name="Mottier S."/>
            <person name="Galibert F."/>
            <person name="Aves S.J."/>
            <person name="Xiang Z."/>
            <person name="Hunt C."/>
            <person name="Moore K."/>
            <person name="Hurst S.M."/>
            <person name="Lucas M."/>
            <person name="Rochet M."/>
            <person name="Gaillardin C."/>
            <person name="Tallada V.A."/>
            <person name="Garzon A."/>
            <person name="Thode G."/>
            <person name="Daga R.R."/>
            <person name="Cruzado L."/>
            <person name="Jimenez J."/>
            <person name="Sanchez M."/>
            <person name="del Rey F."/>
            <person name="Benito J."/>
            <person name="Dominguez A."/>
            <person name="Revuelta J.L."/>
            <person name="Moreno S."/>
            <person name="Armstrong J."/>
            <person name="Forsburg S.L."/>
            <person name="Cerutti L."/>
            <person name="Lowe T."/>
            <person name="McCombie W.R."/>
            <person name="Paulsen I."/>
            <person name="Potashkin J."/>
            <person name="Shpakovski G.V."/>
            <person name="Ussery D."/>
            <person name="Barrell B.G."/>
            <person name="Nurse P."/>
        </authorList>
    </citation>
    <scope>NUCLEOTIDE SEQUENCE [LARGE SCALE GENOMIC DNA]</scope>
    <source>
        <strain>972 / ATCC 24843</strain>
    </source>
</reference>
<reference key="2">
    <citation type="journal article" date="2006" name="Nat. Biotechnol.">
        <title>ORFeome cloning and global analysis of protein localization in the fission yeast Schizosaccharomyces pombe.</title>
        <authorList>
            <person name="Matsuyama A."/>
            <person name="Arai R."/>
            <person name="Yashiroda Y."/>
            <person name="Shirai A."/>
            <person name="Kamata A."/>
            <person name="Sekido S."/>
            <person name="Kobayashi Y."/>
            <person name="Hashimoto A."/>
            <person name="Hamamoto M."/>
            <person name="Hiraoka Y."/>
            <person name="Horinouchi S."/>
            <person name="Yoshida M."/>
        </authorList>
    </citation>
    <scope>SUBCELLULAR LOCATION [LARGE SCALE ANALYSIS]</scope>
</reference>
<reference key="3">
    <citation type="journal article" date="2008" name="J. Proteome Res.">
        <title>Phosphoproteome analysis of fission yeast.</title>
        <authorList>
            <person name="Wilson-Grady J.T."/>
            <person name="Villen J."/>
            <person name="Gygi S.P."/>
        </authorList>
    </citation>
    <scope>PHOSPHORYLATION [LARGE SCALE ANALYSIS] AT SER-632</scope>
    <scope>IDENTIFICATION BY MASS SPECTROMETRY</scope>
</reference>
<dbReference type="EMBL" id="CU329671">
    <property type="protein sequence ID" value="CAB66438.1"/>
    <property type="molecule type" value="Genomic_DNA"/>
</dbReference>
<dbReference type="PIR" id="T50397">
    <property type="entry name" value="T50397"/>
</dbReference>
<dbReference type="RefSeq" id="NP_595822.1">
    <property type="nucleotide sequence ID" value="NM_001021726.2"/>
</dbReference>
<dbReference type="SMR" id="Q9P7X5"/>
<dbReference type="BioGRID" id="277839">
    <property type="interactions" value="45"/>
</dbReference>
<dbReference type="FunCoup" id="Q9P7X5">
    <property type="interactions" value="686"/>
</dbReference>
<dbReference type="STRING" id="284812.Q9P7X5"/>
<dbReference type="iPTMnet" id="Q9P7X5"/>
<dbReference type="PaxDb" id="4896-SPBP23A10.10.1"/>
<dbReference type="EnsemblFungi" id="SPBP23A10.10.1">
    <property type="protein sequence ID" value="SPBP23A10.10.1:pep"/>
    <property type="gene ID" value="SPBP23A10.10"/>
</dbReference>
<dbReference type="GeneID" id="2541327"/>
<dbReference type="KEGG" id="spo:2541327"/>
<dbReference type="PomBase" id="SPBP23A10.10">
    <property type="gene designation" value="ppk32"/>
</dbReference>
<dbReference type="VEuPathDB" id="FungiDB:SPBP23A10.10"/>
<dbReference type="eggNOG" id="KOG2137">
    <property type="taxonomic scope" value="Eukaryota"/>
</dbReference>
<dbReference type="HOGENOM" id="CLU_008724_1_1_1"/>
<dbReference type="InParanoid" id="Q9P7X5"/>
<dbReference type="OMA" id="MPKMTQP"/>
<dbReference type="PhylomeDB" id="Q9P7X5"/>
<dbReference type="PRO" id="PR:Q9P7X5"/>
<dbReference type="Proteomes" id="UP000002485">
    <property type="component" value="Chromosome II"/>
</dbReference>
<dbReference type="GO" id="GO:0005737">
    <property type="term" value="C:cytoplasm"/>
    <property type="evidence" value="ECO:0000314"/>
    <property type="project" value="PomBase"/>
</dbReference>
<dbReference type="GO" id="GO:0005524">
    <property type="term" value="F:ATP binding"/>
    <property type="evidence" value="ECO:0007669"/>
    <property type="project" value="InterPro"/>
</dbReference>
<dbReference type="GO" id="GO:0004674">
    <property type="term" value="F:protein serine/threonine kinase activity"/>
    <property type="evidence" value="ECO:0000304"/>
    <property type="project" value="PomBase"/>
</dbReference>
<dbReference type="GO" id="GO:1904262">
    <property type="term" value="P:negative regulation of TORC1 signaling"/>
    <property type="evidence" value="ECO:0000315"/>
    <property type="project" value="PomBase"/>
</dbReference>
<dbReference type="CDD" id="cd14011">
    <property type="entry name" value="PK_SCY1_like"/>
    <property type="match status" value="1"/>
</dbReference>
<dbReference type="FunFam" id="1.10.510.10:FF:001115">
    <property type="entry name" value="Serine/threonine kinase like domain containing 1"/>
    <property type="match status" value="1"/>
</dbReference>
<dbReference type="Gene3D" id="1.25.10.10">
    <property type="entry name" value="Leucine-rich Repeat Variant"/>
    <property type="match status" value="1"/>
</dbReference>
<dbReference type="Gene3D" id="3.30.200.20">
    <property type="entry name" value="Phosphorylase Kinase, domain 1"/>
    <property type="match status" value="1"/>
</dbReference>
<dbReference type="Gene3D" id="1.10.510.10">
    <property type="entry name" value="Transferase(Phosphotransferase) domain 1"/>
    <property type="match status" value="1"/>
</dbReference>
<dbReference type="InterPro" id="IPR011989">
    <property type="entry name" value="ARM-like"/>
</dbReference>
<dbReference type="InterPro" id="IPR016024">
    <property type="entry name" value="ARM-type_fold"/>
</dbReference>
<dbReference type="InterPro" id="IPR051177">
    <property type="entry name" value="CIK-Related_Protein"/>
</dbReference>
<dbReference type="InterPro" id="IPR011009">
    <property type="entry name" value="Kinase-like_dom_sf"/>
</dbReference>
<dbReference type="InterPro" id="IPR000719">
    <property type="entry name" value="Prot_kinase_dom"/>
</dbReference>
<dbReference type="PANTHER" id="PTHR12984:SF6">
    <property type="entry name" value="SCY1-LIKE PROTEIN 2"/>
    <property type="match status" value="1"/>
</dbReference>
<dbReference type="PANTHER" id="PTHR12984">
    <property type="entry name" value="SCY1-RELATED S/T PROTEIN KINASE-LIKE"/>
    <property type="match status" value="1"/>
</dbReference>
<dbReference type="Pfam" id="PF00069">
    <property type="entry name" value="Pkinase"/>
    <property type="match status" value="1"/>
</dbReference>
<dbReference type="SMART" id="SM00220">
    <property type="entry name" value="S_TKc"/>
    <property type="match status" value="1"/>
</dbReference>
<dbReference type="SUPFAM" id="SSF48371">
    <property type="entry name" value="ARM repeat"/>
    <property type="match status" value="1"/>
</dbReference>
<dbReference type="SUPFAM" id="SSF56112">
    <property type="entry name" value="Protein kinase-like (PK-like)"/>
    <property type="match status" value="1"/>
</dbReference>
<dbReference type="PROSITE" id="PS50011">
    <property type="entry name" value="PROTEIN_KINASE_DOM"/>
    <property type="match status" value="1"/>
</dbReference>
<comment type="subcellular location">
    <subcellularLocation>
        <location evidence="3">Cytoplasm</location>
    </subcellularLocation>
</comment>
<comment type="domain">
    <text>The protein kinase domain is predicted to be catalytically inactive.</text>
</comment>
<name>PPK32_SCHPO</name>
<protein>
    <recommendedName>
        <fullName>Protein kinase domain-containing protein ppk32</fullName>
    </recommendedName>
</protein>
<organism>
    <name type="scientific">Schizosaccharomyces pombe (strain 972 / ATCC 24843)</name>
    <name type="common">Fission yeast</name>
    <dbReference type="NCBI Taxonomy" id="284812"/>
    <lineage>
        <taxon>Eukaryota</taxon>
        <taxon>Fungi</taxon>
        <taxon>Dikarya</taxon>
        <taxon>Ascomycota</taxon>
        <taxon>Taphrinomycotina</taxon>
        <taxon>Schizosaccharomycetes</taxon>
        <taxon>Schizosaccharomycetales</taxon>
        <taxon>Schizosaccharomycetaceae</taxon>
        <taxon>Schizosaccharomyces</taxon>
    </lineage>
</organism>
<keyword id="KW-0963">Cytoplasm</keyword>
<keyword id="KW-0597">Phosphoprotein</keyword>
<keyword id="KW-1185">Reference proteome</keyword>
<evidence type="ECO:0000255" key="1">
    <source>
        <dbReference type="PROSITE-ProRule" id="PRU00159"/>
    </source>
</evidence>
<evidence type="ECO:0000256" key="2">
    <source>
        <dbReference type="SAM" id="MobiDB-lite"/>
    </source>
</evidence>
<evidence type="ECO:0000269" key="3">
    <source>
    </source>
</evidence>
<evidence type="ECO:0000269" key="4">
    <source>
    </source>
</evidence>
<proteinExistence type="evidence at protein level"/>
<gene>
    <name type="primary">ppk32</name>
    <name type="ORF">SPBP23A10.10</name>
</gene>